<gene>
    <name evidence="1" type="primary">rplD</name>
    <name type="ordered locus">Lxx20320</name>
</gene>
<dbReference type="EMBL" id="AE016822">
    <property type="protein sequence ID" value="AAT89748.1"/>
    <property type="molecule type" value="Genomic_DNA"/>
</dbReference>
<dbReference type="RefSeq" id="WP_011186734.1">
    <property type="nucleotide sequence ID" value="NC_006087.1"/>
</dbReference>
<dbReference type="SMR" id="Q6ACZ6"/>
<dbReference type="STRING" id="281090.Lxx20320"/>
<dbReference type="KEGG" id="lxx:Lxx20320"/>
<dbReference type="eggNOG" id="COG0088">
    <property type="taxonomic scope" value="Bacteria"/>
</dbReference>
<dbReference type="HOGENOM" id="CLU_041575_5_0_11"/>
<dbReference type="Proteomes" id="UP000001306">
    <property type="component" value="Chromosome"/>
</dbReference>
<dbReference type="GO" id="GO:1990904">
    <property type="term" value="C:ribonucleoprotein complex"/>
    <property type="evidence" value="ECO:0007669"/>
    <property type="project" value="UniProtKB-KW"/>
</dbReference>
<dbReference type="GO" id="GO:0005840">
    <property type="term" value="C:ribosome"/>
    <property type="evidence" value="ECO:0007669"/>
    <property type="project" value="UniProtKB-KW"/>
</dbReference>
<dbReference type="GO" id="GO:0019843">
    <property type="term" value="F:rRNA binding"/>
    <property type="evidence" value="ECO:0007669"/>
    <property type="project" value="UniProtKB-UniRule"/>
</dbReference>
<dbReference type="GO" id="GO:0003735">
    <property type="term" value="F:structural constituent of ribosome"/>
    <property type="evidence" value="ECO:0007669"/>
    <property type="project" value="InterPro"/>
</dbReference>
<dbReference type="GO" id="GO:0006412">
    <property type="term" value="P:translation"/>
    <property type="evidence" value="ECO:0007669"/>
    <property type="project" value="UniProtKB-UniRule"/>
</dbReference>
<dbReference type="FunFam" id="3.40.1370.10:FF:000004">
    <property type="entry name" value="50S ribosomal protein L4"/>
    <property type="match status" value="1"/>
</dbReference>
<dbReference type="Gene3D" id="3.40.1370.10">
    <property type="match status" value="1"/>
</dbReference>
<dbReference type="HAMAP" id="MF_01328_B">
    <property type="entry name" value="Ribosomal_uL4_B"/>
    <property type="match status" value="1"/>
</dbReference>
<dbReference type="InterPro" id="IPR002136">
    <property type="entry name" value="Ribosomal_uL4"/>
</dbReference>
<dbReference type="InterPro" id="IPR013005">
    <property type="entry name" value="Ribosomal_uL4-like"/>
</dbReference>
<dbReference type="InterPro" id="IPR023574">
    <property type="entry name" value="Ribosomal_uL4_dom_sf"/>
</dbReference>
<dbReference type="NCBIfam" id="TIGR03953">
    <property type="entry name" value="rplD_bact"/>
    <property type="match status" value="1"/>
</dbReference>
<dbReference type="PANTHER" id="PTHR10746">
    <property type="entry name" value="50S RIBOSOMAL PROTEIN L4"/>
    <property type="match status" value="1"/>
</dbReference>
<dbReference type="PANTHER" id="PTHR10746:SF6">
    <property type="entry name" value="LARGE RIBOSOMAL SUBUNIT PROTEIN UL4M"/>
    <property type="match status" value="1"/>
</dbReference>
<dbReference type="Pfam" id="PF00573">
    <property type="entry name" value="Ribosomal_L4"/>
    <property type="match status" value="1"/>
</dbReference>
<dbReference type="SUPFAM" id="SSF52166">
    <property type="entry name" value="Ribosomal protein L4"/>
    <property type="match status" value="1"/>
</dbReference>
<organism>
    <name type="scientific">Leifsonia xyli subsp. xyli (strain CTCB07)</name>
    <dbReference type="NCBI Taxonomy" id="281090"/>
    <lineage>
        <taxon>Bacteria</taxon>
        <taxon>Bacillati</taxon>
        <taxon>Actinomycetota</taxon>
        <taxon>Actinomycetes</taxon>
        <taxon>Micrococcales</taxon>
        <taxon>Microbacteriaceae</taxon>
        <taxon>Leifsonia</taxon>
    </lineage>
</organism>
<proteinExistence type="inferred from homology"/>
<name>RL4_LEIXX</name>
<feature type="chain" id="PRO_0000242390" description="Large ribosomal subunit protein uL4">
    <location>
        <begin position="1"/>
        <end position="221"/>
    </location>
</feature>
<feature type="region of interest" description="Disordered" evidence="2">
    <location>
        <begin position="45"/>
        <end position="100"/>
    </location>
</feature>
<evidence type="ECO:0000255" key="1">
    <source>
        <dbReference type="HAMAP-Rule" id="MF_01328"/>
    </source>
</evidence>
<evidence type="ECO:0000256" key="2">
    <source>
        <dbReference type="SAM" id="MobiDB-lite"/>
    </source>
</evidence>
<evidence type="ECO:0000305" key="3"/>
<keyword id="KW-1185">Reference proteome</keyword>
<keyword id="KW-0687">Ribonucleoprotein</keyword>
<keyword id="KW-0689">Ribosomal protein</keyword>
<keyword id="KW-0694">RNA-binding</keyword>
<keyword id="KW-0699">rRNA-binding</keyword>
<protein>
    <recommendedName>
        <fullName evidence="1">Large ribosomal subunit protein uL4</fullName>
    </recommendedName>
    <alternativeName>
        <fullName evidence="3">50S ribosomal protein L4</fullName>
    </alternativeName>
</protein>
<accession>Q6ACZ6</accession>
<sequence>MATSIDVVDLKGKKAGSIELPDSLFDVQTNIPLIHQVVTAQLAAARQGTHKTKNRGEVSGAGRKPFKQKGTGRARQGSIRAPQMTGGGIVHGPTPRDYSQRTPKKMIAAALLGALSDRARGSRIHAVQAFTAGEAPSTKAVVELLSGVATSKHVLVVLERDDELAFKSVRNIASVHALTYDQLNAYDVLVSDDIVFTQAALEGFIAAKSTSAATKKEEVNA</sequence>
<comment type="function">
    <text evidence="1">One of the primary rRNA binding proteins, this protein initially binds near the 5'-end of the 23S rRNA. It is important during the early stages of 50S assembly. It makes multiple contacts with different domains of the 23S rRNA in the assembled 50S subunit and ribosome.</text>
</comment>
<comment type="function">
    <text evidence="1">Forms part of the polypeptide exit tunnel.</text>
</comment>
<comment type="subunit">
    <text evidence="1">Part of the 50S ribosomal subunit.</text>
</comment>
<comment type="similarity">
    <text evidence="1">Belongs to the universal ribosomal protein uL4 family.</text>
</comment>
<reference key="1">
    <citation type="journal article" date="2004" name="Mol. Plant Microbe Interact.">
        <title>The genome sequence of the Gram-positive sugarcane pathogen Leifsonia xyli subsp. xyli.</title>
        <authorList>
            <person name="Monteiro-Vitorello C.B."/>
            <person name="Camargo L.E.A."/>
            <person name="Van Sluys M.A."/>
            <person name="Kitajima J.P."/>
            <person name="Truffi D."/>
            <person name="do Amaral A.M."/>
            <person name="Harakava R."/>
            <person name="de Oliveira J.C.F."/>
            <person name="Wood D."/>
            <person name="de Oliveira M.C."/>
            <person name="Miyaki C.Y."/>
            <person name="Takita M.A."/>
            <person name="da Silva A.C.R."/>
            <person name="Furlan L.R."/>
            <person name="Carraro D.M."/>
            <person name="Camarotte G."/>
            <person name="Almeida N.F. Jr."/>
            <person name="Carrer H."/>
            <person name="Coutinho L.L."/>
            <person name="El-Dorry H.A."/>
            <person name="Ferro M.I.T."/>
            <person name="Gagliardi P.R."/>
            <person name="Giglioti E."/>
            <person name="Goldman M.H.S."/>
            <person name="Goldman G.H."/>
            <person name="Kimura E.T."/>
            <person name="Ferro E.S."/>
            <person name="Kuramae E.E."/>
            <person name="Lemos E.G.M."/>
            <person name="Lemos M.V.F."/>
            <person name="Mauro S.M.Z."/>
            <person name="Machado M.A."/>
            <person name="Marino C.L."/>
            <person name="Menck C.F."/>
            <person name="Nunes L.R."/>
            <person name="Oliveira R.C."/>
            <person name="Pereira G.G."/>
            <person name="Siqueira W."/>
            <person name="de Souza A.A."/>
            <person name="Tsai S.M."/>
            <person name="Zanca A.S."/>
            <person name="Simpson A.J.G."/>
            <person name="Brumbley S.M."/>
            <person name="Setubal J.C."/>
        </authorList>
    </citation>
    <scope>NUCLEOTIDE SEQUENCE [LARGE SCALE GENOMIC DNA]</scope>
    <source>
        <strain>CTCB07</strain>
    </source>
</reference>